<feature type="chain" id="PRO_0000259315" description="D-aminoacyl-tRNA deacylase">
    <location>
        <begin position="1"/>
        <end position="145"/>
    </location>
</feature>
<feature type="short sequence motif" description="Gly-cisPro motif, important for rejection of L-amino acids" evidence="1">
    <location>
        <begin position="137"/>
        <end position="138"/>
    </location>
</feature>
<protein>
    <recommendedName>
        <fullName evidence="1">D-aminoacyl-tRNA deacylase</fullName>
        <shortName evidence="1">DTD</shortName>
        <ecNumber evidence="1">3.1.1.96</ecNumber>
    </recommendedName>
    <alternativeName>
        <fullName evidence="1">Gly-tRNA(Ala) deacylase</fullName>
    </alternativeName>
</protein>
<accession>Q2NQS5</accession>
<keyword id="KW-0963">Cytoplasm</keyword>
<keyword id="KW-0378">Hydrolase</keyword>
<keyword id="KW-0694">RNA-binding</keyword>
<keyword id="KW-0820">tRNA-binding</keyword>
<gene>
    <name evidence="1" type="primary">dtd</name>
    <name type="ordered locus">SG2225</name>
</gene>
<evidence type="ECO:0000255" key="1">
    <source>
        <dbReference type="HAMAP-Rule" id="MF_00518"/>
    </source>
</evidence>
<comment type="function">
    <text evidence="1">An aminoacyl-tRNA editing enzyme that deacylates mischarged D-aminoacyl-tRNAs. Also deacylates mischarged glycyl-tRNA(Ala), protecting cells against glycine mischarging by AlaRS. Acts via tRNA-based rather than protein-based catalysis; rejects L-amino acids rather than detecting D-amino acids in the active site. By recycling D-aminoacyl-tRNA to D-amino acids and free tRNA molecules, this enzyme counteracts the toxicity associated with the formation of D-aminoacyl-tRNA entities in vivo and helps enforce protein L-homochirality.</text>
</comment>
<comment type="catalytic activity">
    <reaction evidence="1">
        <text>glycyl-tRNA(Ala) + H2O = tRNA(Ala) + glycine + H(+)</text>
        <dbReference type="Rhea" id="RHEA:53744"/>
        <dbReference type="Rhea" id="RHEA-COMP:9657"/>
        <dbReference type="Rhea" id="RHEA-COMP:13640"/>
        <dbReference type="ChEBI" id="CHEBI:15377"/>
        <dbReference type="ChEBI" id="CHEBI:15378"/>
        <dbReference type="ChEBI" id="CHEBI:57305"/>
        <dbReference type="ChEBI" id="CHEBI:78442"/>
        <dbReference type="ChEBI" id="CHEBI:78522"/>
        <dbReference type="EC" id="3.1.1.96"/>
    </reaction>
</comment>
<comment type="catalytic activity">
    <reaction evidence="1">
        <text>a D-aminoacyl-tRNA + H2O = a tRNA + a D-alpha-amino acid + H(+)</text>
        <dbReference type="Rhea" id="RHEA:13953"/>
        <dbReference type="Rhea" id="RHEA-COMP:10123"/>
        <dbReference type="Rhea" id="RHEA-COMP:10124"/>
        <dbReference type="ChEBI" id="CHEBI:15377"/>
        <dbReference type="ChEBI" id="CHEBI:15378"/>
        <dbReference type="ChEBI" id="CHEBI:59871"/>
        <dbReference type="ChEBI" id="CHEBI:78442"/>
        <dbReference type="ChEBI" id="CHEBI:79333"/>
        <dbReference type="EC" id="3.1.1.96"/>
    </reaction>
</comment>
<comment type="subunit">
    <text evidence="1">Homodimer.</text>
</comment>
<comment type="subcellular location">
    <subcellularLocation>
        <location evidence="1">Cytoplasm</location>
    </subcellularLocation>
</comment>
<comment type="domain">
    <text evidence="1">A Gly-cisPro motif from one monomer fits into the active site of the other monomer to allow specific chiral rejection of L-amino acids.</text>
</comment>
<comment type="similarity">
    <text evidence="1">Belongs to the DTD family.</text>
</comment>
<reference key="1">
    <citation type="journal article" date="2006" name="Genome Res.">
        <title>Massive genome erosion and functional adaptations provide insights into the symbiotic lifestyle of Sodalis glossinidius in the tsetse host.</title>
        <authorList>
            <person name="Toh H."/>
            <person name="Weiss B.L."/>
            <person name="Perkin S.A.H."/>
            <person name="Yamashita A."/>
            <person name="Oshima K."/>
            <person name="Hattori M."/>
            <person name="Aksoy S."/>
        </authorList>
    </citation>
    <scope>NUCLEOTIDE SEQUENCE [LARGE SCALE GENOMIC DNA]</scope>
    <source>
        <strain>morsitans</strain>
    </source>
</reference>
<sequence length="145" mass="15995">MIALIQRVTQARVTIDNEVAGAIGPGLLILLGVERQDDEQKAAKLCERVLAYRIFSDEQGKMNLNVRQSGGRVLVVSQFTLAVDTDRGLRPGFSRGAAPADARRLYDDFTDRCRQTGIRTETGRFGADMQVALVNDGPVTFWLQV</sequence>
<name>DTD_SODGM</name>
<proteinExistence type="inferred from homology"/>
<dbReference type="EC" id="3.1.1.96" evidence="1"/>
<dbReference type="EMBL" id="AP008232">
    <property type="protein sequence ID" value="BAE75500.1"/>
    <property type="molecule type" value="Genomic_DNA"/>
</dbReference>
<dbReference type="RefSeq" id="WP_011412036.1">
    <property type="nucleotide sequence ID" value="NC_007712.1"/>
</dbReference>
<dbReference type="SMR" id="Q2NQS5"/>
<dbReference type="STRING" id="343509.SG2225"/>
<dbReference type="KEGG" id="sgl:SG2225"/>
<dbReference type="eggNOG" id="COG1490">
    <property type="taxonomic scope" value="Bacteria"/>
</dbReference>
<dbReference type="HOGENOM" id="CLU_076901_1_0_6"/>
<dbReference type="OrthoDB" id="9801395at2"/>
<dbReference type="BioCyc" id="SGLO343509:SGP1_RS20505-MONOMER"/>
<dbReference type="Proteomes" id="UP000001932">
    <property type="component" value="Chromosome"/>
</dbReference>
<dbReference type="GO" id="GO:0005737">
    <property type="term" value="C:cytoplasm"/>
    <property type="evidence" value="ECO:0007669"/>
    <property type="project" value="UniProtKB-SubCell"/>
</dbReference>
<dbReference type="GO" id="GO:0051500">
    <property type="term" value="F:D-tyrosyl-tRNA(Tyr) deacylase activity"/>
    <property type="evidence" value="ECO:0007669"/>
    <property type="project" value="TreeGrafter"/>
</dbReference>
<dbReference type="GO" id="GO:0106026">
    <property type="term" value="F:Gly-tRNA(Ala) deacylase activity"/>
    <property type="evidence" value="ECO:0007669"/>
    <property type="project" value="UniProtKB-UniRule"/>
</dbReference>
<dbReference type="GO" id="GO:0043908">
    <property type="term" value="F:Ser(Gly)-tRNA(Ala) hydrolase activity"/>
    <property type="evidence" value="ECO:0007669"/>
    <property type="project" value="UniProtKB-UniRule"/>
</dbReference>
<dbReference type="GO" id="GO:0000049">
    <property type="term" value="F:tRNA binding"/>
    <property type="evidence" value="ECO:0007669"/>
    <property type="project" value="UniProtKB-UniRule"/>
</dbReference>
<dbReference type="GO" id="GO:0019478">
    <property type="term" value="P:D-amino acid catabolic process"/>
    <property type="evidence" value="ECO:0007669"/>
    <property type="project" value="UniProtKB-UniRule"/>
</dbReference>
<dbReference type="CDD" id="cd00563">
    <property type="entry name" value="Dtyr_deacylase"/>
    <property type="match status" value="1"/>
</dbReference>
<dbReference type="FunFam" id="3.50.80.10:FF:000001">
    <property type="entry name" value="D-aminoacyl-tRNA deacylase"/>
    <property type="match status" value="1"/>
</dbReference>
<dbReference type="Gene3D" id="3.50.80.10">
    <property type="entry name" value="D-tyrosyl-tRNA(Tyr) deacylase"/>
    <property type="match status" value="1"/>
</dbReference>
<dbReference type="HAMAP" id="MF_00518">
    <property type="entry name" value="Deacylase_Dtd"/>
    <property type="match status" value="1"/>
</dbReference>
<dbReference type="InterPro" id="IPR003732">
    <property type="entry name" value="Daa-tRNA_deacyls_DTD"/>
</dbReference>
<dbReference type="InterPro" id="IPR023509">
    <property type="entry name" value="DTD-like_sf"/>
</dbReference>
<dbReference type="NCBIfam" id="TIGR00256">
    <property type="entry name" value="D-aminoacyl-tRNA deacylase"/>
    <property type="match status" value="1"/>
</dbReference>
<dbReference type="PANTHER" id="PTHR10472:SF5">
    <property type="entry name" value="D-AMINOACYL-TRNA DEACYLASE 1"/>
    <property type="match status" value="1"/>
</dbReference>
<dbReference type="PANTHER" id="PTHR10472">
    <property type="entry name" value="D-TYROSYL-TRNA TYR DEACYLASE"/>
    <property type="match status" value="1"/>
</dbReference>
<dbReference type="Pfam" id="PF02580">
    <property type="entry name" value="Tyr_Deacylase"/>
    <property type="match status" value="1"/>
</dbReference>
<dbReference type="SUPFAM" id="SSF69500">
    <property type="entry name" value="DTD-like"/>
    <property type="match status" value="1"/>
</dbReference>
<organism>
    <name type="scientific">Sodalis glossinidius (strain morsitans)</name>
    <dbReference type="NCBI Taxonomy" id="343509"/>
    <lineage>
        <taxon>Bacteria</taxon>
        <taxon>Pseudomonadati</taxon>
        <taxon>Pseudomonadota</taxon>
        <taxon>Gammaproteobacteria</taxon>
        <taxon>Enterobacterales</taxon>
        <taxon>Bruguierivoracaceae</taxon>
        <taxon>Sodalis</taxon>
    </lineage>
</organism>